<evidence type="ECO:0000255" key="1"/>
<evidence type="ECO:0000255" key="2">
    <source>
        <dbReference type="PROSITE-ProRule" id="PRU00094"/>
    </source>
</evidence>
<evidence type="ECO:0000256" key="3">
    <source>
        <dbReference type="SAM" id="MobiDB-lite"/>
    </source>
</evidence>
<name>GTAP_DICDI</name>
<dbReference type="EMBL" id="AAFI02000179">
    <property type="protein sequence ID" value="EDR41024.1"/>
    <property type="molecule type" value="Genomic_DNA"/>
</dbReference>
<dbReference type="RefSeq" id="XP_001733051.1">
    <property type="nucleotide sequence ID" value="XM_001732999.1"/>
</dbReference>
<dbReference type="SMR" id="B0G188"/>
<dbReference type="PaxDb" id="44689-DDB0252553"/>
<dbReference type="EnsemblProtists" id="EDR41024">
    <property type="protein sequence ID" value="EDR41024"/>
    <property type="gene ID" value="DDB_G0295707"/>
</dbReference>
<dbReference type="GeneID" id="8628287"/>
<dbReference type="KEGG" id="ddi:DDB_G0295707"/>
<dbReference type="dictyBase" id="DDB_G0295707">
    <property type="gene designation" value="gtaP"/>
</dbReference>
<dbReference type="VEuPathDB" id="AmoebaDB:DDB_G0295707"/>
<dbReference type="eggNOG" id="KOG1601">
    <property type="taxonomic scope" value="Eukaryota"/>
</dbReference>
<dbReference type="HOGENOM" id="CLU_396617_0_0_1"/>
<dbReference type="InParanoid" id="B0G188"/>
<dbReference type="PRO" id="PR:B0G188"/>
<dbReference type="Proteomes" id="UP000002195">
    <property type="component" value="Chromosome 6"/>
</dbReference>
<dbReference type="GO" id="GO:0043565">
    <property type="term" value="F:sequence-specific DNA binding"/>
    <property type="evidence" value="ECO:0007669"/>
    <property type="project" value="InterPro"/>
</dbReference>
<dbReference type="GO" id="GO:0008270">
    <property type="term" value="F:zinc ion binding"/>
    <property type="evidence" value="ECO:0007669"/>
    <property type="project" value="UniProtKB-KW"/>
</dbReference>
<dbReference type="GO" id="GO:0006355">
    <property type="term" value="P:regulation of DNA-templated transcription"/>
    <property type="evidence" value="ECO:0007669"/>
    <property type="project" value="InterPro"/>
</dbReference>
<dbReference type="CDD" id="cd00202">
    <property type="entry name" value="ZnF_GATA"/>
    <property type="match status" value="1"/>
</dbReference>
<dbReference type="Gene3D" id="3.30.50.10">
    <property type="entry name" value="Erythroid Transcription Factor GATA-1, subunit A"/>
    <property type="match status" value="1"/>
</dbReference>
<dbReference type="InterPro" id="IPR051140">
    <property type="entry name" value="GATA_TF"/>
</dbReference>
<dbReference type="InterPro" id="IPR000679">
    <property type="entry name" value="Znf_GATA"/>
</dbReference>
<dbReference type="InterPro" id="IPR013088">
    <property type="entry name" value="Znf_NHR/GATA"/>
</dbReference>
<dbReference type="PANTHER" id="PTHR45658">
    <property type="entry name" value="GATA TRANSCRIPTION FACTOR"/>
    <property type="match status" value="1"/>
</dbReference>
<dbReference type="PANTHER" id="PTHR45658:SF18">
    <property type="entry name" value="PROTEIN GAT2"/>
    <property type="match status" value="1"/>
</dbReference>
<dbReference type="Pfam" id="PF00320">
    <property type="entry name" value="GATA"/>
    <property type="match status" value="1"/>
</dbReference>
<dbReference type="SMART" id="SM00401">
    <property type="entry name" value="ZnF_GATA"/>
    <property type="match status" value="1"/>
</dbReference>
<dbReference type="SUPFAM" id="SSF57716">
    <property type="entry name" value="Glucocorticoid receptor-like (DNA-binding domain)"/>
    <property type="match status" value="1"/>
</dbReference>
<dbReference type="PROSITE" id="PS00344">
    <property type="entry name" value="GATA_ZN_FINGER_1"/>
    <property type="match status" value="1"/>
</dbReference>
<dbReference type="PROSITE" id="PS50114">
    <property type="entry name" value="GATA_ZN_FINGER_2"/>
    <property type="match status" value="1"/>
</dbReference>
<sequence length="695" mass="76475">MNSYQIQNQPYQQIQNTHPSFQQVQPMQVPHLQQQQQHQTMIAQQQHTPPQQHTPPQMNMIQQHTQPMLSQPQISLQMQPPSPILASQQQQQHMQSSPILASSNLTNSNNASQTTLPIITSKLLLKKEPIDQEVVNSTHKTTTTNNKPPKQSKRKEKERLEEEKQTVAQQQQYQPPFIPLASNESNSDNPFKGSHAYGVSTTPYGNSQFNNNNNNNNNNNNNNNNSNNNSNNNNGNNNINNNNNNSNNNNNNNSNNNNNNSNNNNGNNNNNNNNNNNNNNNNHNTNNNNSNSNNNNNNGYQQDKKDDYSMMIWSEVGRKINILIRTTSKATKGTPISTQEIAEAIGASNGVTADLVELIKSINDPTYVRKLPPSSISNTPTMGSQSGGMVYNSSPMLSPSTMSPILQHGNYQMGGDMYFGGNNQFSGDKQSALNNVKNSKGGNTNNSGGGSSSGGTNDTQAKKPARRRKMRYGGTELSCHTCGVTNTPEWRRGPNGAKTLCNACGLAWAKSVKSEKQKELLANSTGVNITEPKKAQKRKKESSDNNNNNNNSSDSNKVLKSDDGSNNTNLTNDDDNGYPSSPNSSNSTSPSSHNINNNNNNNNNNNNNNNNNNNNNNNNNNNNIGNNNNNNINNNNTTNSITTPTTTPFPTTIPAMQIVSQLPVMVPQTQQQPHMSGNIISFQALHQNSGYQHYK</sequence>
<protein>
    <recommendedName>
        <fullName>GATA zinc finger domain-containing protein 16</fullName>
    </recommendedName>
</protein>
<keyword id="KW-0175">Coiled coil</keyword>
<keyword id="KW-0479">Metal-binding</keyword>
<keyword id="KW-1185">Reference proteome</keyword>
<keyword id="KW-0862">Zinc</keyword>
<keyword id="KW-0863">Zinc-finger</keyword>
<accession>B0G188</accession>
<feature type="chain" id="PRO_0000330449" description="GATA zinc finger domain-containing protein 16">
    <location>
        <begin position="1"/>
        <end position="695"/>
    </location>
</feature>
<feature type="zinc finger region" description="GATA-type" evidence="2">
    <location>
        <begin position="479"/>
        <end position="504"/>
    </location>
</feature>
<feature type="region of interest" description="Disordered" evidence="3">
    <location>
        <begin position="82"/>
        <end position="111"/>
    </location>
</feature>
<feature type="region of interest" description="Disordered" evidence="3">
    <location>
        <begin position="134"/>
        <end position="304"/>
    </location>
</feature>
<feature type="region of interest" description="Disordered" evidence="3">
    <location>
        <begin position="422"/>
        <end position="472"/>
    </location>
</feature>
<feature type="region of interest" description="Disordered" evidence="3">
    <location>
        <begin position="523"/>
        <end position="646"/>
    </location>
</feature>
<feature type="coiled-coil region" evidence="1">
    <location>
        <begin position="150"/>
        <end position="174"/>
    </location>
</feature>
<feature type="compositionally biased region" description="Low complexity" evidence="3">
    <location>
        <begin position="87"/>
        <end position="111"/>
    </location>
</feature>
<feature type="compositionally biased region" description="Low complexity" evidence="3">
    <location>
        <begin position="140"/>
        <end position="149"/>
    </location>
</feature>
<feature type="compositionally biased region" description="Basic and acidic residues" evidence="3">
    <location>
        <begin position="155"/>
        <end position="165"/>
    </location>
</feature>
<feature type="compositionally biased region" description="Polar residues" evidence="3">
    <location>
        <begin position="199"/>
        <end position="209"/>
    </location>
</feature>
<feature type="compositionally biased region" description="Low complexity" evidence="3">
    <location>
        <begin position="210"/>
        <end position="298"/>
    </location>
</feature>
<feature type="compositionally biased region" description="Polar residues" evidence="3">
    <location>
        <begin position="422"/>
        <end position="433"/>
    </location>
</feature>
<feature type="compositionally biased region" description="Low complexity" evidence="3">
    <location>
        <begin position="434"/>
        <end position="446"/>
    </location>
</feature>
<feature type="compositionally biased region" description="Low complexity" evidence="3">
    <location>
        <begin position="544"/>
        <end position="556"/>
    </location>
</feature>
<feature type="compositionally biased region" description="Low complexity" evidence="3">
    <location>
        <begin position="564"/>
        <end position="646"/>
    </location>
</feature>
<reference key="1">
    <citation type="journal article" date="2005" name="Nature">
        <title>The genome of the social amoeba Dictyostelium discoideum.</title>
        <authorList>
            <person name="Eichinger L."/>
            <person name="Pachebat J.A."/>
            <person name="Gloeckner G."/>
            <person name="Rajandream M.A."/>
            <person name="Sucgang R."/>
            <person name="Berriman M."/>
            <person name="Song J."/>
            <person name="Olsen R."/>
            <person name="Szafranski K."/>
            <person name="Xu Q."/>
            <person name="Tunggal B."/>
            <person name="Kummerfeld S."/>
            <person name="Madera M."/>
            <person name="Konfortov B.A."/>
            <person name="Rivero F."/>
            <person name="Bankier A.T."/>
            <person name="Lehmann R."/>
            <person name="Hamlin N."/>
            <person name="Davies R."/>
            <person name="Gaudet P."/>
            <person name="Fey P."/>
            <person name="Pilcher K."/>
            <person name="Chen G."/>
            <person name="Saunders D."/>
            <person name="Sodergren E.J."/>
            <person name="Davis P."/>
            <person name="Kerhornou A."/>
            <person name="Nie X."/>
            <person name="Hall N."/>
            <person name="Anjard C."/>
            <person name="Hemphill L."/>
            <person name="Bason N."/>
            <person name="Farbrother P."/>
            <person name="Desany B."/>
            <person name="Just E."/>
            <person name="Morio T."/>
            <person name="Rost R."/>
            <person name="Churcher C.M."/>
            <person name="Cooper J."/>
            <person name="Haydock S."/>
            <person name="van Driessche N."/>
            <person name="Cronin A."/>
            <person name="Goodhead I."/>
            <person name="Muzny D.M."/>
            <person name="Mourier T."/>
            <person name="Pain A."/>
            <person name="Lu M."/>
            <person name="Harper D."/>
            <person name="Lindsay R."/>
            <person name="Hauser H."/>
            <person name="James K.D."/>
            <person name="Quiles M."/>
            <person name="Madan Babu M."/>
            <person name="Saito T."/>
            <person name="Buchrieser C."/>
            <person name="Wardroper A."/>
            <person name="Felder M."/>
            <person name="Thangavelu M."/>
            <person name="Johnson D."/>
            <person name="Knights A."/>
            <person name="Loulseged H."/>
            <person name="Mungall K.L."/>
            <person name="Oliver K."/>
            <person name="Price C."/>
            <person name="Quail M.A."/>
            <person name="Urushihara H."/>
            <person name="Hernandez J."/>
            <person name="Rabbinowitsch E."/>
            <person name="Steffen D."/>
            <person name="Sanders M."/>
            <person name="Ma J."/>
            <person name="Kohara Y."/>
            <person name="Sharp S."/>
            <person name="Simmonds M.N."/>
            <person name="Spiegler S."/>
            <person name="Tivey A."/>
            <person name="Sugano S."/>
            <person name="White B."/>
            <person name="Walker D."/>
            <person name="Woodward J.R."/>
            <person name="Winckler T."/>
            <person name="Tanaka Y."/>
            <person name="Shaulsky G."/>
            <person name="Schleicher M."/>
            <person name="Weinstock G.M."/>
            <person name="Rosenthal A."/>
            <person name="Cox E.C."/>
            <person name="Chisholm R.L."/>
            <person name="Gibbs R.A."/>
            <person name="Loomis W.F."/>
            <person name="Platzer M."/>
            <person name="Kay R.R."/>
            <person name="Williams J.G."/>
            <person name="Dear P.H."/>
            <person name="Noegel A.A."/>
            <person name="Barrell B.G."/>
            <person name="Kuspa A."/>
        </authorList>
    </citation>
    <scope>NUCLEOTIDE SEQUENCE [LARGE SCALE GENOMIC DNA]</scope>
    <source>
        <strain>AX4</strain>
    </source>
</reference>
<proteinExistence type="predicted"/>
<organism>
    <name type="scientific">Dictyostelium discoideum</name>
    <name type="common">Social amoeba</name>
    <dbReference type="NCBI Taxonomy" id="44689"/>
    <lineage>
        <taxon>Eukaryota</taxon>
        <taxon>Amoebozoa</taxon>
        <taxon>Evosea</taxon>
        <taxon>Eumycetozoa</taxon>
        <taxon>Dictyostelia</taxon>
        <taxon>Dictyosteliales</taxon>
        <taxon>Dictyosteliaceae</taxon>
        <taxon>Dictyostelium</taxon>
    </lineage>
</organism>
<gene>
    <name type="primary">gtaP</name>
    <name type="ORF">DDB_G0295707</name>
</gene>